<feature type="chain" id="PRO_0000366952" description="Defensin-like protein 1">
    <location>
        <begin position="1"/>
        <end position="50"/>
    </location>
</feature>
<feature type="disulfide bond" evidence="1">
    <location>
        <begin position="3"/>
        <end position="50"/>
    </location>
</feature>
<feature type="disulfide bond" evidence="1">
    <location>
        <begin position="14"/>
        <end position="35"/>
    </location>
</feature>
<feature type="disulfide bond" evidence="1">
    <location>
        <begin position="20"/>
        <end position="44"/>
    </location>
</feature>
<feature type="disulfide bond" evidence="1">
    <location>
        <begin position="24"/>
        <end position="46"/>
    </location>
</feature>
<sequence length="50" mass="5525">ELCEKASKTWSGNCGNTGHCDNQCKSWEGAAHGACHVRNGKHMCFCYFNC</sequence>
<proteinExistence type="evidence at protein level"/>
<accession>P0C8Y4</accession>
<protein>
    <recommendedName>
        <fullName>Defensin-like protein 1</fullName>
    </recommendedName>
    <alternativeName>
        <fullName>Cysteine-rich antimicrobial protein 1</fullName>
    </alternativeName>
    <alternativeName>
        <fullName>Defensin AMP1</fullName>
        <shortName>DmAMP1</shortName>
    </alternativeName>
</protein>
<keyword id="KW-0929">Antimicrobial</keyword>
<keyword id="KW-0903">Direct protein sequencing</keyword>
<keyword id="KW-1015">Disulfide bond</keyword>
<keyword id="KW-0295">Fungicide</keyword>
<keyword id="KW-0611">Plant defense</keyword>
<keyword id="KW-0964">Secreted</keyword>
<dbReference type="SMR" id="P0C8Y4"/>
<dbReference type="GO" id="GO:0005576">
    <property type="term" value="C:extracellular region"/>
    <property type="evidence" value="ECO:0007669"/>
    <property type="project" value="UniProtKB-SubCell"/>
</dbReference>
<dbReference type="GO" id="GO:0050832">
    <property type="term" value="P:defense response to fungus"/>
    <property type="evidence" value="ECO:0007669"/>
    <property type="project" value="UniProtKB-KW"/>
</dbReference>
<dbReference type="GO" id="GO:0031640">
    <property type="term" value="P:killing of cells of another organism"/>
    <property type="evidence" value="ECO:0007669"/>
    <property type="project" value="UniProtKB-KW"/>
</dbReference>
<dbReference type="Gene3D" id="3.30.30.10">
    <property type="entry name" value="Knottin, scorpion toxin-like"/>
    <property type="match status" value="1"/>
</dbReference>
<dbReference type="InterPro" id="IPR003614">
    <property type="entry name" value="Scorpion_toxin-like"/>
</dbReference>
<dbReference type="InterPro" id="IPR036574">
    <property type="entry name" value="Scorpion_toxin-like_sf"/>
</dbReference>
<dbReference type="PANTHER" id="PTHR33147">
    <property type="entry name" value="DEFENSIN-LIKE PROTEIN 1"/>
    <property type="match status" value="1"/>
</dbReference>
<dbReference type="PANTHER" id="PTHR33147:SF98">
    <property type="entry name" value="GAMMA-THIONIN-RELATED"/>
    <property type="match status" value="1"/>
</dbReference>
<dbReference type="Pfam" id="PF00304">
    <property type="entry name" value="Gamma-thionin"/>
    <property type="match status" value="1"/>
</dbReference>
<dbReference type="SMART" id="SM00505">
    <property type="entry name" value="Knot1"/>
    <property type="match status" value="1"/>
</dbReference>
<dbReference type="SUPFAM" id="SSF57095">
    <property type="entry name" value="Scorpion toxin-like"/>
    <property type="match status" value="1"/>
</dbReference>
<evidence type="ECO:0000250" key="1"/>
<evidence type="ECO:0000269" key="2">
    <source>
    </source>
</evidence>
<evidence type="ECO:0000269" key="3">
    <source>
    </source>
</evidence>
<evidence type="ECO:0000269" key="4">
    <source>
    </source>
</evidence>
<evidence type="ECO:0000269" key="5">
    <source>
    </source>
</evidence>
<evidence type="ECO:0000269" key="6">
    <source>
    </source>
</evidence>
<evidence type="ECO:0000269" key="7">
    <source>
    </source>
</evidence>
<evidence type="ECO:0000305" key="8"/>
<name>DEF1_DAHME</name>
<reference key="1">
    <citation type="journal article" date="1995" name="FEBS Lett.">
        <title>Isolation and characterisation of plant defensins from seeds of Asteraceae, Fabaceae, Hippocastanaceae and Saxifragaceae.</title>
        <authorList>
            <person name="Osborn R.W."/>
            <person name="De Samblanx G.W."/>
            <person name="Thevissen K."/>
            <person name="Goderis I."/>
            <person name="Torrekens S."/>
            <person name="Van Leuven F."/>
            <person name="Attenborough S."/>
            <person name="Rees S.B."/>
            <person name="Broekaert W.F."/>
        </authorList>
    </citation>
    <scope>PROTEIN SEQUENCE</scope>
    <scope>FUNCTION</scope>
    <source>
        <tissue>Seed</tissue>
    </source>
</reference>
<reference key="2">
    <citation type="journal article" date="1996" name="J. Biol. Chem.">
        <title>Fungal membrane responses induced by plant defensins and thionins.</title>
        <authorList>
            <person name="Thevissen K."/>
            <person name="Ghazi A."/>
            <person name="De Samblanx G.W."/>
            <person name="Brownlee C."/>
            <person name="Osborn R.W."/>
            <person name="Broekaert W.F."/>
        </authorList>
    </citation>
    <scope>FUNCTION</scope>
</reference>
<reference key="3">
    <citation type="journal article" date="2000" name="Mol. Plant Microbe Interact.">
        <title>Specific binding sites for an antifungal plant defensin from Dahlia (Dahlia merckii) on fungal cells are required for antifungal activity.</title>
        <authorList>
            <person name="Thevissen K."/>
            <person name="Osborn R.W."/>
            <person name="Acland D.P."/>
            <person name="Broekaert W.F."/>
        </authorList>
    </citation>
    <scope>FUNCTION</scope>
</reference>
<reference key="4">
    <citation type="journal article" date="2003" name="FEMS Microbiol. Lett.">
        <title>DmAMP1, an antifungal plant defensin from dahlia (Dahlia merckii), interacts with sphingolipids from Saccharomyces cerevisiae.</title>
        <authorList>
            <person name="Thevissen K."/>
            <person name="Francois I.E.J.A."/>
            <person name="Takemoto J.Y."/>
            <person name="Ferket K.K.A."/>
            <person name="Meert E.M.K."/>
            <person name="Cammue B.P.A."/>
        </authorList>
    </citation>
    <scope>FUNCTION</scope>
</reference>
<reference key="5">
    <citation type="journal article" date="2007" name="Planta">
        <title>Ectopic expression of Dahlia merckii defensin DmAMP1 improves papaya resistance to Phytophthora palmivora by reducing pathogen vigor.</title>
        <authorList>
            <person name="Zhu Y.J."/>
            <person name="Agbayani R."/>
            <person name="Moore P.H."/>
        </authorList>
    </citation>
    <scope>BIOTECHNOLOGY</scope>
</reference>
<reference key="6">
    <citation type="journal article" date="2009" name="Transgenic Res.">
        <title>Expression of Dm-AMP1 in rice confers resistance to Magnaporthe oryzae and Rhizoctonia solani.</title>
        <authorList>
            <person name="Jha S."/>
            <person name="Tank H.G."/>
            <person name="Prasad B.D."/>
            <person name="Chattoo B.B."/>
        </authorList>
    </citation>
    <scope>BIOTECHNOLOGY</scope>
</reference>
<comment type="function">
    <text evidence="2 3 6 7">Possesses antimicrobial activity sensitive to inorganic cations. Has no inhibitory effect on insect gut alpha-amylase. Induces potential changes in fungal membranes and increased K+ efflux and Ca(2+) uptake. Interacts with sphingolipids and ergosterols found in fungal plasma membranes.</text>
</comment>
<comment type="subcellular location">
    <subcellularLocation>
        <location evidence="1">Secreted</location>
    </subcellularLocation>
</comment>
<comment type="biotechnology">
    <text evidence="4 5">DmAMP1 expression in heterologous plants such as rice or papaya may provide a broad-spectrum disease resistance.</text>
</comment>
<comment type="similarity">
    <text evidence="8">Belongs to the DEFL family.</text>
</comment>
<organism>
    <name type="scientific">Dahlia merckii</name>
    <name type="common">Bedding dahlia</name>
    <dbReference type="NCBI Taxonomy" id="43367"/>
    <lineage>
        <taxon>Eukaryota</taxon>
        <taxon>Viridiplantae</taxon>
        <taxon>Streptophyta</taxon>
        <taxon>Embryophyta</taxon>
        <taxon>Tracheophyta</taxon>
        <taxon>Spermatophyta</taxon>
        <taxon>Magnoliopsida</taxon>
        <taxon>eudicotyledons</taxon>
        <taxon>Gunneridae</taxon>
        <taxon>Pentapetalae</taxon>
        <taxon>asterids</taxon>
        <taxon>campanulids</taxon>
        <taxon>Asterales</taxon>
        <taxon>Asteraceae</taxon>
        <taxon>Asteroideae</taxon>
        <taxon>Heliantheae alliance</taxon>
        <taxon>Coreopsideae</taxon>
        <taxon>Dahlia</taxon>
    </lineage>
</organism>